<name>PSD_PLAFA</name>
<organism>
    <name type="scientific">Plasmodium falciparum</name>
    <dbReference type="NCBI Taxonomy" id="5833"/>
    <lineage>
        <taxon>Eukaryota</taxon>
        <taxon>Sar</taxon>
        <taxon>Alveolata</taxon>
        <taxon>Apicomplexa</taxon>
        <taxon>Aconoidasida</taxon>
        <taxon>Haemosporida</taxon>
        <taxon>Plasmodiidae</taxon>
        <taxon>Plasmodium</taxon>
        <taxon>Plasmodium (Laverania)</taxon>
    </lineage>
</organism>
<accession>Q9GPP8</accession>
<feature type="chain" id="PRO_0000435580" description="Phosphatidylserine decarboxylase proenzyme">
    <location>
        <begin position="1"/>
        <end position="362"/>
    </location>
</feature>
<feature type="chain" id="PRO_0000435581" description="Phosphatidylserine decarboxylase beta chain" evidence="1">
    <location>
        <begin position="1"/>
        <end position="315"/>
    </location>
</feature>
<feature type="chain" id="PRO_0000435582" description="Phosphatidylserine decarboxylase alpha chain" evidence="1">
    <location>
        <begin position="316"/>
        <end position="362"/>
    </location>
</feature>
<feature type="transmembrane region" description="Helical" evidence="1">
    <location>
        <begin position="26"/>
        <end position="44"/>
    </location>
</feature>
<feature type="active site" description="Charge relay system; for autoendoproteolytic cleavage activity" evidence="1">
    <location>
        <position position="147"/>
    </location>
</feature>
<feature type="active site" description="Charge relay system; for autoendoproteolytic cleavage activity" evidence="1">
    <location>
        <position position="206"/>
    </location>
</feature>
<feature type="active site" description="Charge relay system; for autoendoproteolytic cleavage activity" evidence="1">
    <location>
        <position position="316"/>
    </location>
</feature>
<feature type="active site" description="Schiff-base intermediate with substrate; via pyruvic acid; for decarboxylase activity" evidence="1">
    <location>
        <position position="316"/>
    </location>
</feature>
<feature type="site" description="Cleavage (non-hydrolytic); by autocatalysis" evidence="1 2 6">
    <location>
        <begin position="315"/>
        <end position="316"/>
    </location>
</feature>
<feature type="modified residue" description="Pyruvic acid (Ser); by autocatalysis" evidence="1">
    <location>
        <position position="316"/>
    </location>
</feature>
<feature type="mutagenesis site" description="Prevents processing of the proenzyme." evidence="2">
    <original>G</original>
    <variation>A</variation>
    <location>
        <position position="315"/>
    </location>
</feature>
<feature type="mutagenesis site" description="Prevents processing of the proenzyme." evidence="2">
    <original>S</original>
    <variation>A</variation>
    <variation>T</variation>
    <location>
        <position position="316"/>
    </location>
</feature>
<sequence length="362" mass="42636">MLSKFYYCKMRKGKSPSSFFSLHKKYLLTGVTILSFIFMFQYKYHEVLTVYEDKTNVQQSSRLFWTRLLFGRTRSRITGRIFNIEIPHSSRLYVYNFFIKYLNINKEEIKYPIESYKSLGDFFSRYIREDTRPIGDLNEYSIVSPCDSEIVDFGELTSNYLDNVKGIKFNIKTFLGSDMIKKYNDDSTSFYYAIFYLSPKKYHHFHAPFNFKYKIRRHISGEVFPVFQGMFKIINNLFDINERVILSGEWKGGHVYYAAISAYNVGNIKIVNDEDLLTNNLRTQLSYMGGDINTKIYDHYKDLEIGDEVGEFKVGSSIIVIFENKKNFKWNVKPNQQISVGERIGGVDQPKQPQNKFIKIRS</sequence>
<proteinExistence type="evidence at protein level"/>
<protein>
    <recommendedName>
        <fullName evidence="1 4">Phosphatidylserine decarboxylase proenzyme</fullName>
        <ecNumber evidence="1 2">4.1.1.65</ecNumber>
    </recommendedName>
    <component>
        <recommendedName>
            <fullName evidence="1 5">Phosphatidylserine decarboxylase beta chain</fullName>
        </recommendedName>
    </component>
    <component>
        <recommendedName>
            <fullName evidence="1 5">Phosphatidylserine decarboxylase alpha chain</fullName>
        </recommendedName>
    </component>
</protein>
<evidence type="ECO:0000255" key="1">
    <source>
        <dbReference type="HAMAP-Rule" id="MF_03208"/>
    </source>
</evidence>
<evidence type="ECO:0000269" key="2">
    <source>
    </source>
</evidence>
<evidence type="ECO:0000269" key="3">
    <source>
    </source>
</evidence>
<evidence type="ECO:0000303" key="4">
    <source>
    </source>
</evidence>
<evidence type="ECO:0000305" key="5">
    <source>
    </source>
</evidence>
<evidence type="ECO:0000305" key="6">
    <source>
    </source>
</evidence>
<reference key="1">
    <citation type="journal article" date="2004" name="Mol. Microbiol.">
        <title>Characterization of a non-mitochondrial type I phosphatidylserine decarboxylase in Plasmodium falciparum.</title>
        <authorList>
            <person name="Baunaure F."/>
            <person name="Eldin P."/>
            <person name="Cathiard A.M."/>
            <person name="Vial H."/>
        </authorList>
    </citation>
    <scope>NUCLEOTIDE SEQUENCE [GENOMIC DNA / MRNA]</scope>
    <scope>FUNCTION</scope>
    <scope>CATALYTIC ACTIVITY</scope>
    <scope>BIOPHYSICOCHEMICAL PROPERTIES</scope>
    <scope>CLEAVAGE SITE</scope>
    <scope>SUBCELLULAR LOCATION</scope>
    <scope>MUTAGENESIS OF GLY-315 AND SER-316</scope>
    <source>
        <strain>Nigerian</strain>
    </source>
</reference>
<reference key="2">
    <citation type="journal article" date="2016" name="Mol. Microbiol.">
        <title>Characterization of Plasmodium phosphatidylserine decarboxylase expressed in yeast and application for inhibitor screening.</title>
        <authorList>
            <person name="Choi J.Y."/>
            <person name="Kumar V."/>
            <person name="Pachikara N."/>
            <person name="Garg A."/>
            <person name="Lawres L."/>
            <person name="Toh J."/>
            <person name="Voelker D.R."/>
            <person name="Mamoun C.B."/>
        </authorList>
    </citation>
    <scope>FUNCTION</scope>
</reference>
<dbReference type="EC" id="4.1.1.65" evidence="1 2"/>
<dbReference type="EMBL" id="AF312489">
    <property type="protein sequence ID" value="AAG38562.2"/>
    <property type="molecule type" value="mRNA"/>
</dbReference>
<dbReference type="EMBL" id="AY140651">
    <property type="protein sequence ID" value="AAN34609.1"/>
    <property type="molecule type" value="Genomic_DNA"/>
</dbReference>
<dbReference type="SMR" id="Q9GPP8"/>
<dbReference type="VEuPathDB" id="PlasmoDB:PF3D7_0927900"/>
<dbReference type="VEuPathDB" id="PlasmoDB:Pf7G8-2_000275900"/>
<dbReference type="VEuPathDB" id="PlasmoDB:Pf7G8_090032700"/>
<dbReference type="VEuPathDB" id="PlasmoDB:PfCD01_090032200"/>
<dbReference type="VEuPathDB" id="PlasmoDB:PfDd2_090032900"/>
<dbReference type="VEuPathDB" id="PlasmoDB:PfGA01_090032100"/>
<dbReference type="VEuPathDB" id="PlasmoDB:PfGB4_090032800"/>
<dbReference type="VEuPathDB" id="PlasmoDB:PfGN01_090032700"/>
<dbReference type="VEuPathDB" id="PlasmoDB:PfHB3_090032500"/>
<dbReference type="VEuPathDB" id="PlasmoDB:PfIT_090032400"/>
<dbReference type="VEuPathDB" id="PlasmoDB:PfKE01_090032200"/>
<dbReference type="VEuPathDB" id="PlasmoDB:PfKH01_090032100"/>
<dbReference type="VEuPathDB" id="PlasmoDB:PfKH02_090032600"/>
<dbReference type="VEuPathDB" id="PlasmoDB:PfML01_090032300"/>
<dbReference type="VEuPathDB" id="PlasmoDB:PfNF135_090031500"/>
<dbReference type="VEuPathDB" id="PlasmoDB:PfNF166_090031900"/>
<dbReference type="VEuPathDB" id="PlasmoDB:PfNF54_090033000"/>
<dbReference type="VEuPathDB" id="PlasmoDB:PfSD01_090032800"/>
<dbReference type="VEuPathDB" id="PlasmoDB:PfSN01_090032400"/>
<dbReference type="VEuPathDB" id="PlasmoDB:PfTG01_090032200"/>
<dbReference type="BRENDA" id="4.1.1.65">
    <property type="organism ID" value="4889"/>
</dbReference>
<dbReference type="UniPathway" id="UPA00558">
    <property type="reaction ID" value="UER00616"/>
</dbReference>
<dbReference type="GO" id="GO:0005789">
    <property type="term" value="C:endoplasmic reticulum membrane"/>
    <property type="evidence" value="ECO:0007669"/>
    <property type="project" value="UniProtKB-SubCell"/>
</dbReference>
<dbReference type="GO" id="GO:0005739">
    <property type="term" value="C:mitochondrion"/>
    <property type="evidence" value="ECO:0007669"/>
    <property type="project" value="InterPro"/>
</dbReference>
<dbReference type="GO" id="GO:0004609">
    <property type="term" value="F:phosphatidylserine decarboxylase activity"/>
    <property type="evidence" value="ECO:0007669"/>
    <property type="project" value="UniProtKB-UniRule"/>
</dbReference>
<dbReference type="GO" id="GO:0006646">
    <property type="term" value="P:phosphatidylethanolamine biosynthetic process"/>
    <property type="evidence" value="ECO:0007669"/>
    <property type="project" value="UniProtKB-UniRule"/>
</dbReference>
<dbReference type="GO" id="GO:0016540">
    <property type="term" value="P:protein autoprocessing"/>
    <property type="evidence" value="ECO:0007669"/>
    <property type="project" value="UniProtKB-UniRule"/>
</dbReference>
<dbReference type="HAMAP" id="MF_03208">
    <property type="entry name" value="PS_decarb_PSD_B_type1_euk"/>
    <property type="match status" value="1"/>
</dbReference>
<dbReference type="InterPro" id="IPR003817">
    <property type="entry name" value="PS_Dcarbxylase"/>
</dbReference>
<dbReference type="InterPro" id="IPR033177">
    <property type="entry name" value="PSD-B"/>
</dbReference>
<dbReference type="InterPro" id="IPR033661">
    <property type="entry name" value="PSD_type1_euk"/>
</dbReference>
<dbReference type="NCBIfam" id="TIGR00163">
    <property type="entry name" value="PS_decarb"/>
    <property type="match status" value="1"/>
</dbReference>
<dbReference type="PANTHER" id="PTHR10067">
    <property type="entry name" value="PHOSPHATIDYLSERINE DECARBOXYLASE"/>
    <property type="match status" value="1"/>
</dbReference>
<dbReference type="PANTHER" id="PTHR10067:SF6">
    <property type="entry name" value="PHOSPHATIDYLSERINE DECARBOXYLASE PROENZYME, MITOCHONDRIAL"/>
    <property type="match status" value="1"/>
</dbReference>
<dbReference type="Pfam" id="PF02666">
    <property type="entry name" value="PS_Dcarbxylase"/>
    <property type="match status" value="1"/>
</dbReference>
<keyword id="KW-0210">Decarboxylase</keyword>
<keyword id="KW-0256">Endoplasmic reticulum</keyword>
<keyword id="KW-0444">Lipid biosynthesis</keyword>
<keyword id="KW-0443">Lipid metabolism</keyword>
<keyword id="KW-0456">Lyase</keyword>
<keyword id="KW-0472">Membrane</keyword>
<keyword id="KW-0594">Phospholipid biosynthesis</keyword>
<keyword id="KW-1208">Phospholipid metabolism</keyword>
<keyword id="KW-0670">Pyruvate</keyword>
<keyword id="KW-0812">Transmembrane</keyword>
<keyword id="KW-1133">Transmembrane helix</keyword>
<keyword id="KW-0865">Zymogen</keyword>
<comment type="function">
    <text evidence="1 2 3">Catalyzes the formation of phosphatidylethanolamine (PtdEtn) from phosphatidylserine (PtdSer). Plays a central role in phospholipid metabolism and in the interorganelle trafficking of phosphatidylserine.</text>
</comment>
<comment type="catalytic activity">
    <reaction evidence="1 2">
        <text>a 1,2-diacyl-sn-glycero-3-phospho-L-serine + H(+) = a 1,2-diacyl-sn-glycero-3-phosphoethanolamine + CO2</text>
        <dbReference type="Rhea" id="RHEA:20828"/>
        <dbReference type="ChEBI" id="CHEBI:15378"/>
        <dbReference type="ChEBI" id="CHEBI:16526"/>
        <dbReference type="ChEBI" id="CHEBI:57262"/>
        <dbReference type="ChEBI" id="CHEBI:64612"/>
        <dbReference type="EC" id="4.1.1.65"/>
    </reaction>
</comment>
<comment type="cofactor">
    <cofactor evidence="1 5">
        <name>pyruvate</name>
        <dbReference type="ChEBI" id="CHEBI:15361"/>
    </cofactor>
    <text evidence="1">Binds 1 pyruvoyl group covalently per subunit.</text>
</comment>
<comment type="biophysicochemical properties">
    <kinetics>
        <KM evidence="2">63 uM for dioleoyl phosphatidylserine</KM>
        <Vmax evidence="2">680.0 nmol/h/mg enzyme</Vmax>
    </kinetics>
    <phDependence>
        <text evidence="2">Optimum pH is 6.8.</text>
    </phDependence>
</comment>
<comment type="pathway">
    <text evidence="1 5">Phospholipid metabolism; phosphatidylethanolamine biosynthesis; phosphatidylethanolamine from CDP-diacylglycerol: step 2/2.</text>
</comment>
<comment type="subunit">
    <text evidence="1">Heterodimer of a large membrane-associated beta subunit and a small pyruvoyl-containing alpha subunit.</text>
</comment>
<comment type="subcellular location">
    <subcellularLocation>
        <location evidence="1 2">Endoplasmic reticulum membrane</location>
        <topology evidence="1">Single-pass membrane protein</topology>
    </subcellularLocation>
    <text evidence="1 2">Equally found in the membrane-bound as well as in the soluble fraction.</text>
</comment>
<comment type="PTM">
    <text evidence="1">Is synthesized initially as an inactive proenzyme. Formation of the active enzyme involves a self-maturation process in which the active site pyruvoyl group is generated from an internal serine residue via an autocatalytic post-translational modification. Two non-identical subunits are generated from the proenzyme in this reaction, and the pyruvate is formed at the N-terminus of the alpha chain, which is derived from the carboxyl end of the proenzyme. The autoendoproteolytic cleavage occurs by a canonical serine protease mechanism, in which the side chain hydroxyl group of the serine supplies its oxygen atom to form the C-terminus of the beta chain, while the remainder of the serine residue undergoes an oxidative deamination to produce ammonia and the pyruvoyl prosthetic group on the alpha chain. During this reaction, the Ser that is part of the protease active site of the proenzyme becomes the pyruvoyl prosthetic group, which constitutes an essential element of the active site of the mature decarboxylase.</text>
</comment>
<comment type="similarity">
    <text evidence="1">Belongs to the phosphatidylserine decarboxylase family. PSD-B subfamily. Eukaryotic type I sub-subfamily.</text>
</comment>